<dbReference type="EMBL" id="AB049642">
    <property type="protein sequence ID" value="BAB40847.1"/>
    <property type="molecule type" value="mRNA"/>
</dbReference>
<dbReference type="EMBL" id="AF183428">
    <property type="protein sequence ID" value="AAG09697.1"/>
    <property type="molecule type" value="mRNA"/>
</dbReference>
<dbReference type="EMBL" id="AK000491">
    <property type="protein sequence ID" value="BAA91202.1"/>
    <property type="molecule type" value="mRNA"/>
</dbReference>
<dbReference type="EMBL" id="CR457117">
    <property type="protein sequence ID" value="CAG33398.1"/>
    <property type="molecule type" value="mRNA"/>
</dbReference>
<dbReference type="EMBL" id="BC001040">
    <property type="protein sequence ID" value="AAH01040.1"/>
    <property type="molecule type" value="mRNA"/>
</dbReference>
<dbReference type="EMBL" id="BC019269">
    <property type="protein sequence ID" value="AAH19269.1"/>
    <property type="molecule type" value="mRNA"/>
</dbReference>
<dbReference type="EMBL" id="AF275806">
    <property type="protein sequence ID" value="AAG23818.1"/>
    <property type="status" value="ALT_INIT"/>
    <property type="molecule type" value="mRNA"/>
</dbReference>
<dbReference type="CCDS" id="CCDS7976.1"/>
<dbReference type="RefSeq" id="NP_060310.1">
    <property type="nucleotide sequence ID" value="NM_017840.4"/>
</dbReference>
<dbReference type="PDB" id="3IY9">
    <property type="method" value="EM"/>
    <property type="resolution" value="14.10 A"/>
    <property type="chains" value="I=71-188"/>
</dbReference>
<dbReference type="PDB" id="3J7Y">
    <property type="method" value="EM"/>
    <property type="resolution" value="3.40 A"/>
    <property type="chains" value="N=1-251"/>
</dbReference>
<dbReference type="PDB" id="3J9M">
    <property type="method" value="EM"/>
    <property type="resolution" value="3.50 A"/>
    <property type="chains" value="N=1-251"/>
</dbReference>
<dbReference type="PDB" id="5OOL">
    <property type="method" value="EM"/>
    <property type="resolution" value="3.06 A"/>
    <property type="chains" value="N=1-251"/>
</dbReference>
<dbReference type="PDB" id="5OOM">
    <property type="method" value="EM"/>
    <property type="resolution" value="3.03 A"/>
    <property type="chains" value="N=1-251"/>
</dbReference>
<dbReference type="PDB" id="6I9R">
    <property type="method" value="EM"/>
    <property type="resolution" value="3.90 A"/>
    <property type="chains" value="N=1-251"/>
</dbReference>
<dbReference type="PDB" id="6NU2">
    <property type="method" value="EM"/>
    <property type="resolution" value="3.90 A"/>
    <property type="chains" value="N=47-251"/>
</dbReference>
<dbReference type="PDB" id="6NU3">
    <property type="method" value="EM"/>
    <property type="resolution" value="4.40 A"/>
    <property type="chains" value="N=1-251"/>
</dbReference>
<dbReference type="PDB" id="6VLZ">
    <property type="method" value="EM"/>
    <property type="resolution" value="2.97 A"/>
    <property type="chains" value="N=1-251"/>
</dbReference>
<dbReference type="PDB" id="6VMI">
    <property type="method" value="EM"/>
    <property type="resolution" value="2.96 A"/>
    <property type="chains" value="N=1-251"/>
</dbReference>
<dbReference type="PDB" id="6ZM5">
    <property type="method" value="EM"/>
    <property type="resolution" value="2.89 A"/>
    <property type="chains" value="N=1-251"/>
</dbReference>
<dbReference type="PDB" id="6ZM6">
    <property type="method" value="EM"/>
    <property type="resolution" value="2.59 A"/>
    <property type="chains" value="N=1-251"/>
</dbReference>
<dbReference type="PDB" id="6ZS9">
    <property type="method" value="EM"/>
    <property type="resolution" value="4.00 A"/>
    <property type="chains" value="XN=1-251"/>
</dbReference>
<dbReference type="PDB" id="6ZSA">
    <property type="method" value="EM"/>
    <property type="resolution" value="4.00 A"/>
    <property type="chains" value="XN=1-251"/>
</dbReference>
<dbReference type="PDB" id="6ZSB">
    <property type="method" value="EM"/>
    <property type="resolution" value="4.50 A"/>
    <property type="chains" value="XN=1-251"/>
</dbReference>
<dbReference type="PDB" id="6ZSC">
    <property type="method" value="EM"/>
    <property type="resolution" value="3.50 A"/>
    <property type="chains" value="XN=1-251"/>
</dbReference>
<dbReference type="PDB" id="6ZSD">
    <property type="method" value="EM"/>
    <property type="resolution" value="3.70 A"/>
    <property type="chains" value="XN=1-251"/>
</dbReference>
<dbReference type="PDB" id="6ZSE">
    <property type="method" value="EM"/>
    <property type="resolution" value="5.00 A"/>
    <property type="chains" value="XN=1-251"/>
</dbReference>
<dbReference type="PDB" id="6ZSG">
    <property type="method" value="EM"/>
    <property type="resolution" value="4.00 A"/>
    <property type="chains" value="XN=1-251"/>
</dbReference>
<dbReference type="PDB" id="7A5F">
    <property type="method" value="EM"/>
    <property type="resolution" value="4.40 A"/>
    <property type="chains" value="N3=1-251"/>
</dbReference>
<dbReference type="PDB" id="7A5G">
    <property type="method" value="EM"/>
    <property type="resolution" value="4.33 A"/>
    <property type="chains" value="N3=1-251"/>
</dbReference>
<dbReference type="PDB" id="7A5H">
    <property type="method" value="EM"/>
    <property type="resolution" value="3.30 A"/>
    <property type="chains" value="N=1-251"/>
</dbReference>
<dbReference type="PDB" id="7A5I">
    <property type="method" value="EM"/>
    <property type="resolution" value="3.70 A"/>
    <property type="chains" value="N3=1-251"/>
</dbReference>
<dbReference type="PDB" id="7A5J">
    <property type="method" value="EM"/>
    <property type="resolution" value="3.10 A"/>
    <property type="chains" value="N=1-251"/>
</dbReference>
<dbReference type="PDB" id="7A5K">
    <property type="method" value="EM"/>
    <property type="resolution" value="3.70 A"/>
    <property type="chains" value="N3=1-251"/>
</dbReference>
<dbReference type="PDB" id="7L08">
    <property type="method" value="EM"/>
    <property type="resolution" value="3.49 A"/>
    <property type="chains" value="N=1-251"/>
</dbReference>
<dbReference type="PDB" id="7L20">
    <property type="method" value="EM"/>
    <property type="resolution" value="3.15 A"/>
    <property type="chains" value="N=1-251"/>
</dbReference>
<dbReference type="PDB" id="7O9K">
    <property type="method" value="EM"/>
    <property type="resolution" value="3.10 A"/>
    <property type="chains" value="N=1-251"/>
</dbReference>
<dbReference type="PDB" id="7O9M">
    <property type="method" value="EM"/>
    <property type="resolution" value="2.50 A"/>
    <property type="chains" value="N=1-251"/>
</dbReference>
<dbReference type="PDB" id="7ODR">
    <property type="method" value="EM"/>
    <property type="resolution" value="2.90 A"/>
    <property type="chains" value="N=1-251"/>
</dbReference>
<dbReference type="PDB" id="7ODS">
    <property type="method" value="EM"/>
    <property type="resolution" value="3.10 A"/>
    <property type="chains" value="N=1-251"/>
</dbReference>
<dbReference type="PDB" id="7ODT">
    <property type="method" value="EM"/>
    <property type="resolution" value="3.10 A"/>
    <property type="chains" value="N=1-251"/>
</dbReference>
<dbReference type="PDB" id="7OF0">
    <property type="method" value="EM"/>
    <property type="resolution" value="2.20 A"/>
    <property type="chains" value="N=1-251"/>
</dbReference>
<dbReference type="PDB" id="7OF2">
    <property type="method" value="EM"/>
    <property type="resolution" value="2.70 A"/>
    <property type="chains" value="N=1-251"/>
</dbReference>
<dbReference type="PDB" id="7OF3">
    <property type="method" value="EM"/>
    <property type="resolution" value="2.70 A"/>
    <property type="chains" value="N=1-251"/>
</dbReference>
<dbReference type="PDB" id="7OF4">
    <property type="method" value="EM"/>
    <property type="resolution" value="2.70 A"/>
    <property type="chains" value="N=1-251"/>
</dbReference>
<dbReference type="PDB" id="7OF5">
    <property type="method" value="EM"/>
    <property type="resolution" value="2.90 A"/>
    <property type="chains" value="N=1-251"/>
</dbReference>
<dbReference type="PDB" id="7OF6">
    <property type="method" value="EM"/>
    <property type="resolution" value="2.60 A"/>
    <property type="chains" value="N=1-251"/>
</dbReference>
<dbReference type="PDB" id="7OF7">
    <property type="method" value="EM"/>
    <property type="resolution" value="2.50 A"/>
    <property type="chains" value="N=1-251"/>
</dbReference>
<dbReference type="PDB" id="7OG4">
    <property type="method" value="EM"/>
    <property type="resolution" value="3.80 A"/>
    <property type="chains" value="XN=1-251"/>
</dbReference>
<dbReference type="PDB" id="7OI6">
    <property type="method" value="EM"/>
    <property type="resolution" value="5.70 A"/>
    <property type="chains" value="N=1-251"/>
</dbReference>
<dbReference type="PDB" id="7OI7">
    <property type="method" value="EM"/>
    <property type="resolution" value="3.50 A"/>
    <property type="chains" value="N=1-251"/>
</dbReference>
<dbReference type="PDB" id="7OI8">
    <property type="method" value="EM"/>
    <property type="resolution" value="3.50 A"/>
    <property type="chains" value="N=1-251"/>
</dbReference>
<dbReference type="PDB" id="7OI9">
    <property type="method" value="EM"/>
    <property type="resolution" value="3.30 A"/>
    <property type="chains" value="N=1-251"/>
</dbReference>
<dbReference type="PDB" id="7OIA">
    <property type="method" value="EM"/>
    <property type="resolution" value="3.20 A"/>
    <property type="chains" value="N=1-251"/>
</dbReference>
<dbReference type="PDB" id="7OIB">
    <property type="method" value="EM"/>
    <property type="resolution" value="3.30 A"/>
    <property type="chains" value="N=1-251"/>
</dbReference>
<dbReference type="PDB" id="7OIC">
    <property type="method" value="EM"/>
    <property type="resolution" value="3.10 A"/>
    <property type="chains" value="N=1-251"/>
</dbReference>
<dbReference type="PDB" id="7OID">
    <property type="method" value="EM"/>
    <property type="resolution" value="3.70 A"/>
    <property type="chains" value="N=1-251"/>
</dbReference>
<dbReference type="PDB" id="7OIE">
    <property type="method" value="EM"/>
    <property type="resolution" value="3.50 A"/>
    <property type="chains" value="N=1-251"/>
</dbReference>
<dbReference type="PDB" id="7PD3">
    <property type="method" value="EM"/>
    <property type="resolution" value="3.40 A"/>
    <property type="chains" value="N=1-251"/>
</dbReference>
<dbReference type="PDB" id="7PO4">
    <property type="method" value="EM"/>
    <property type="resolution" value="2.56 A"/>
    <property type="chains" value="N=1-251"/>
</dbReference>
<dbReference type="PDB" id="7QH6">
    <property type="method" value="EM"/>
    <property type="resolution" value="3.08 A"/>
    <property type="chains" value="N=1-251"/>
</dbReference>
<dbReference type="PDB" id="7QH7">
    <property type="method" value="EM"/>
    <property type="resolution" value="2.89 A"/>
    <property type="chains" value="N=51-251"/>
</dbReference>
<dbReference type="PDB" id="7QI4">
    <property type="method" value="EM"/>
    <property type="resolution" value="2.21 A"/>
    <property type="chains" value="N=1-251"/>
</dbReference>
<dbReference type="PDB" id="7QI5">
    <property type="method" value="EM"/>
    <property type="resolution" value="2.63 A"/>
    <property type="chains" value="N=1-251"/>
</dbReference>
<dbReference type="PDB" id="7QI6">
    <property type="method" value="EM"/>
    <property type="resolution" value="2.98 A"/>
    <property type="chains" value="N=1-251"/>
</dbReference>
<dbReference type="PDB" id="8ANY">
    <property type="method" value="EM"/>
    <property type="resolution" value="2.85 A"/>
    <property type="chains" value="N=1-251"/>
</dbReference>
<dbReference type="PDB" id="8K2A">
    <property type="method" value="EM"/>
    <property type="resolution" value="2.90 A"/>
    <property type="chains" value="LP=1-251"/>
</dbReference>
<dbReference type="PDB" id="8K2B">
    <property type="method" value="EM"/>
    <property type="resolution" value="3.40 A"/>
    <property type="chains" value="LP=1-251"/>
</dbReference>
<dbReference type="PDB" id="8OIR">
    <property type="method" value="EM"/>
    <property type="resolution" value="3.10 A"/>
    <property type="chains" value="BU=1-251"/>
</dbReference>
<dbReference type="PDB" id="8OIT">
    <property type="method" value="EM"/>
    <property type="resolution" value="2.90 A"/>
    <property type="chains" value="BU=1-251"/>
</dbReference>
<dbReference type="PDB" id="8PK0">
    <property type="method" value="EM"/>
    <property type="resolution" value="3.03 A"/>
    <property type="chains" value="N=1-251"/>
</dbReference>
<dbReference type="PDB" id="8QSJ">
    <property type="method" value="EM"/>
    <property type="resolution" value="3.00 A"/>
    <property type="chains" value="N=1-251"/>
</dbReference>
<dbReference type="PDB" id="8QU1">
    <property type="method" value="EM"/>
    <property type="resolution" value="2.74 A"/>
    <property type="chains" value="N=1-251"/>
</dbReference>
<dbReference type="PDB" id="8QU5">
    <property type="method" value="EM"/>
    <property type="resolution" value="2.42 A"/>
    <property type="chains" value="N=1-251"/>
</dbReference>
<dbReference type="PDB" id="8RRI">
    <property type="method" value="EM"/>
    <property type="resolution" value="2.40 A"/>
    <property type="chains" value="N=1-251"/>
</dbReference>
<dbReference type="PDB" id="8XT0">
    <property type="method" value="EM"/>
    <property type="resolution" value="3.20 A"/>
    <property type="chains" value="LP=1-251"/>
</dbReference>
<dbReference type="PDB" id="8XT1">
    <property type="method" value="EM"/>
    <property type="resolution" value="3.10 A"/>
    <property type="chains" value="LP=1-251"/>
</dbReference>
<dbReference type="PDB" id="8XT2">
    <property type="method" value="EM"/>
    <property type="resolution" value="3.30 A"/>
    <property type="chains" value="LP=1-251"/>
</dbReference>
<dbReference type="PDB" id="8XT3">
    <property type="method" value="EM"/>
    <property type="resolution" value="3.10 A"/>
    <property type="chains" value="LP=1-251"/>
</dbReference>
<dbReference type="PDBsum" id="3IY9"/>
<dbReference type="PDBsum" id="3J7Y"/>
<dbReference type="PDBsum" id="3J9M"/>
<dbReference type="PDBsum" id="5OOL"/>
<dbReference type="PDBsum" id="5OOM"/>
<dbReference type="PDBsum" id="6I9R"/>
<dbReference type="PDBsum" id="6NU2"/>
<dbReference type="PDBsum" id="6NU3"/>
<dbReference type="PDBsum" id="6VLZ"/>
<dbReference type="PDBsum" id="6VMI"/>
<dbReference type="PDBsum" id="6ZM5"/>
<dbReference type="PDBsum" id="6ZM6"/>
<dbReference type="PDBsum" id="6ZS9"/>
<dbReference type="PDBsum" id="6ZSA"/>
<dbReference type="PDBsum" id="6ZSB"/>
<dbReference type="PDBsum" id="6ZSC"/>
<dbReference type="PDBsum" id="6ZSD"/>
<dbReference type="PDBsum" id="6ZSE"/>
<dbReference type="PDBsum" id="6ZSG"/>
<dbReference type="PDBsum" id="7A5F"/>
<dbReference type="PDBsum" id="7A5G"/>
<dbReference type="PDBsum" id="7A5H"/>
<dbReference type="PDBsum" id="7A5I"/>
<dbReference type="PDBsum" id="7A5J"/>
<dbReference type="PDBsum" id="7A5K"/>
<dbReference type="PDBsum" id="7L08"/>
<dbReference type="PDBsum" id="7L20"/>
<dbReference type="PDBsum" id="7O9K"/>
<dbReference type="PDBsum" id="7O9M"/>
<dbReference type="PDBsum" id="7ODR"/>
<dbReference type="PDBsum" id="7ODS"/>
<dbReference type="PDBsum" id="7ODT"/>
<dbReference type="PDBsum" id="7OF0"/>
<dbReference type="PDBsum" id="7OF2"/>
<dbReference type="PDBsum" id="7OF3"/>
<dbReference type="PDBsum" id="7OF4"/>
<dbReference type="PDBsum" id="7OF5"/>
<dbReference type="PDBsum" id="7OF6"/>
<dbReference type="PDBsum" id="7OF7"/>
<dbReference type="PDBsum" id="7OG4"/>
<dbReference type="PDBsum" id="7OI6"/>
<dbReference type="PDBsum" id="7OI7"/>
<dbReference type="PDBsum" id="7OI8"/>
<dbReference type="PDBsum" id="7OI9"/>
<dbReference type="PDBsum" id="7OIA"/>
<dbReference type="PDBsum" id="7OIB"/>
<dbReference type="PDBsum" id="7OIC"/>
<dbReference type="PDBsum" id="7OID"/>
<dbReference type="PDBsum" id="7OIE"/>
<dbReference type="PDBsum" id="7PD3"/>
<dbReference type="PDBsum" id="7PO4"/>
<dbReference type="PDBsum" id="7QH6"/>
<dbReference type="PDBsum" id="7QH7"/>
<dbReference type="PDBsum" id="7QI4"/>
<dbReference type="PDBsum" id="7QI5"/>
<dbReference type="PDBsum" id="7QI6"/>
<dbReference type="PDBsum" id="8ANY"/>
<dbReference type="PDBsum" id="8K2A"/>
<dbReference type="PDBsum" id="8K2B"/>
<dbReference type="PDBsum" id="8OIR"/>
<dbReference type="PDBsum" id="8OIT"/>
<dbReference type="PDBsum" id="8PK0"/>
<dbReference type="PDBsum" id="8QSJ"/>
<dbReference type="PDBsum" id="8QU1"/>
<dbReference type="PDBsum" id="8QU5"/>
<dbReference type="PDBsum" id="8RRI"/>
<dbReference type="PDBsum" id="8XT0"/>
<dbReference type="PDBsum" id="8XT1"/>
<dbReference type="PDBsum" id="8XT2"/>
<dbReference type="PDBsum" id="8XT3"/>
<dbReference type="EMDB" id="EMD-0514"/>
<dbReference type="EMDB" id="EMD-0515"/>
<dbReference type="EMDB" id="EMD-11278"/>
<dbReference type="EMDB" id="EMD-11279"/>
<dbReference type="EMDB" id="EMD-11390"/>
<dbReference type="EMDB" id="EMD-11391"/>
<dbReference type="EMDB" id="EMD-11392"/>
<dbReference type="EMDB" id="EMD-11393"/>
<dbReference type="EMDB" id="EMD-11394"/>
<dbReference type="EMDB" id="EMD-11395"/>
<dbReference type="EMDB" id="EMD-11397"/>
<dbReference type="EMDB" id="EMD-11641"/>
<dbReference type="EMDB" id="EMD-11642"/>
<dbReference type="EMDB" id="EMD-11643"/>
<dbReference type="EMDB" id="EMD-11644"/>
<dbReference type="EMDB" id="EMD-11645"/>
<dbReference type="EMDB" id="EMD-11646"/>
<dbReference type="EMDB" id="EMD-12763"/>
<dbReference type="EMDB" id="EMD-12764"/>
<dbReference type="EMDB" id="EMD-12845"/>
<dbReference type="EMDB" id="EMD-12846"/>
<dbReference type="EMDB" id="EMD-12847"/>
<dbReference type="EMDB" id="EMD-12865"/>
<dbReference type="EMDB" id="EMD-12867"/>
<dbReference type="EMDB" id="EMD-12868"/>
<dbReference type="EMDB" id="EMD-12869"/>
<dbReference type="EMDB" id="EMD-12870"/>
<dbReference type="EMDB" id="EMD-12871"/>
<dbReference type="EMDB" id="EMD-12872"/>
<dbReference type="EMDB" id="EMD-12877"/>
<dbReference type="EMDB" id="EMD-12919"/>
<dbReference type="EMDB" id="EMD-12920"/>
<dbReference type="EMDB" id="EMD-12921"/>
<dbReference type="EMDB" id="EMD-12922"/>
<dbReference type="EMDB" id="EMD-12923"/>
<dbReference type="EMDB" id="EMD-12924"/>
<dbReference type="EMDB" id="EMD-12925"/>
<dbReference type="EMDB" id="EMD-12926"/>
<dbReference type="EMDB" id="EMD-12927"/>
<dbReference type="EMDB" id="EMD-13329"/>
<dbReference type="EMDB" id="EMD-13562"/>
<dbReference type="EMDB" id="EMD-13965"/>
<dbReference type="EMDB" id="EMD-13967"/>
<dbReference type="EMDB" id="EMD-13980"/>
<dbReference type="EMDB" id="EMD-13981"/>
<dbReference type="EMDB" id="EMD-13982"/>
<dbReference type="EMDB" id="EMD-15544"/>
<dbReference type="EMDB" id="EMD-16897"/>
<dbReference type="EMDB" id="EMD-16899"/>
<dbReference type="EMDB" id="EMD-17719"/>
<dbReference type="EMDB" id="EMD-19460"/>
<dbReference type="EMDB" id="EMD-21233"/>
<dbReference type="EMDB" id="EMD-21242"/>
<dbReference type="EMDB" id="EMD-23096"/>
<dbReference type="EMDB" id="EMD-23121"/>
<dbReference type="EMDB" id="EMD-36836"/>
<dbReference type="EMDB" id="EMD-36837"/>
<dbReference type="EMDB" id="EMD-3842"/>
<dbReference type="EMDB" id="EMD-3843"/>
<dbReference type="EMDB" id="EMD-38632"/>
<dbReference type="EMDB" id="EMD-38633"/>
<dbReference type="EMDB" id="EMD-38634"/>
<dbReference type="EMDB" id="EMD-38635"/>
<dbReference type="EMDB" id="EMD-4434"/>
<dbReference type="SMR" id="Q9NX20"/>
<dbReference type="BioGRID" id="120287">
    <property type="interactions" value="204"/>
</dbReference>
<dbReference type="ComplexPortal" id="CPX-5226">
    <property type="entry name" value="39S mitochondrial large ribosomal subunit"/>
</dbReference>
<dbReference type="CORUM" id="Q9NX20"/>
<dbReference type="FunCoup" id="Q9NX20">
    <property type="interactions" value="1291"/>
</dbReference>
<dbReference type="IntAct" id="Q9NX20">
    <property type="interactions" value="103"/>
</dbReference>
<dbReference type="MINT" id="Q9NX20"/>
<dbReference type="STRING" id="9606.ENSP00000300151"/>
<dbReference type="GlyGen" id="Q9NX20">
    <property type="glycosylation" value="2 sites, 1 N-linked glycan (1 site), 1 O-linked glycan (1 site)"/>
</dbReference>
<dbReference type="iPTMnet" id="Q9NX20"/>
<dbReference type="PhosphoSitePlus" id="Q9NX20"/>
<dbReference type="SwissPalm" id="Q9NX20"/>
<dbReference type="BioMuta" id="MRPL16"/>
<dbReference type="DMDM" id="74734684"/>
<dbReference type="jPOST" id="Q9NX20"/>
<dbReference type="MassIVE" id="Q9NX20"/>
<dbReference type="PaxDb" id="9606-ENSP00000300151"/>
<dbReference type="PeptideAtlas" id="Q9NX20"/>
<dbReference type="ProteomicsDB" id="83024"/>
<dbReference type="Pumba" id="Q9NX20"/>
<dbReference type="TopDownProteomics" id="Q9NX20"/>
<dbReference type="Antibodypedia" id="52764">
    <property type="antibodies" value="109 antibodies from 20 providers"/>
</dbReference>
<dbReference type="DNASU" id="54948"/>
<dbReference type="Ensembl" id="ENST00000300151.5">
    <property type="protein sequence ID" value="ENSP00000300151.4"/>
    <property type="gene ID" value="ENSG00000166902.5"/>
</dbReference>
<dbReference type="GeneID" id="54948"/>
<dbReference type="KEGG" id="hsa:54948"/>
<dbReference type="MANE-Select" id="ENST00000300151.5">
    <property type="protein sequence ID" value="ENSP00000300151.4"/>
    <property type="RefSeq nucleotide sequence ID" value="NM_017840.4"/>
    <property type="RefSeq protein sequence ID" value="NP_060310.1"/>
</dbReference>
<dbReference type="UCSC" id="uc001noh.2">
    <property type="organism name" value="human"/>
</dbReference>
<dbReference type="AGR" id="HGNC:14476"/>
<dbReference type="CTD" id="54948"/>
<dbReference type="DisGeNET" id="54948"/>
<dbReference type="GeneCards" id="MRPL16"/>
<dbReference type="HGNC" id="HGNC:14476">
    <property type="gene designation" value="MRPL16"/>
</dbReference>
<dbReference type="HPA" id="ENSG00000166902">
    <property type="expression patterns" value="Low tissue specificity"/>
</dbReference>
<dbReference type="MIM" id="611829">
    <property type="type" value="gene"/>
</dbReference>
<dbReference type="neXtProt" id="NX_Q9NX20"/>
<dbReference type="OpenTargets" id="ENSG00000166902"/>
<dbReference type="PharmGKB" id="PA30945"/>
<dbReference type="VEuPathDB" id="HostDB:ENSG00000166902"/>
<dbReference type="eggNOG" id="KOG3422">
    <property type="taxonomic scope" value="Eukaryota"/>
</dbReference>
<dbReference type="GeneTree" id="ENSGT00390000002038"/>
<dbReference type="HOGENOM" id="CLU_096518_0_0_1"/>
<dbReference type="InParanoid" id="Q9NX20"/>
<dbReference type="OMA" id="WGHMEMM"/>
<dbReference type="OrthoDB" id="268521at2759"/>
<dbReference type="PAN-GO" id="Q9NX20">
    <property type="GO annotations" value="4 GO annotations based on evolutionary models"/>
</dbReference>
<dbReference type="PhylomeDB" id="Q9NX20"/>
<dbReference type="TreeFam" id="TF312969"/>
<dbReference type="PathwayCommons" id="Q9NX20"/>
<dbReference type="Reactome" id="R-HSA-5368286">
    <property type="pathway name" value="Mitochondrial translation initiation"/>
</dbReference>
<dbReference type="Reactome" id="R-HSA-5389840">
    <property type="pathway name" value="Mitochondrial translation elongation"/>
</dbReference>
<dbReference type="Reactome" id="R-HSA-5419276">
    <property type="pathway name" value="Mitochondrial translation termination"/>
</dbReference>
<dbReference type="SignaLink" id="Q9NX20"/>
<dbReference type="SIGNOR" id="Q9NX20"/>
<dbReference type="BioGRID-ORCS" id="54948">
    <property type="hits" value="432 hits in 1161 CRISPR screens"/>
</dbReference>
<dbReference type="ChiTaRS" id="MRPL16">
    <property type="organism name" value="human"/>
</dbReference>
<dbReference type="EvolutionaryTrace" id="Q9NX20"/>
<dbReference type="GenomeRNAi" id="54948"/>
<dbReference type="Pharos" id="Q9NX20">
    <property type="development level" value="Tdark"/>
</dbReference>
<dbReference type="PRO" id="PR:Q9NX20"/>
<dbReference type="Proteomes" id="UP000005640">
    <property type="component" value="Chromosome 11"/>
</dbReference>
<dbReference type="RNAct" id="Q9NX20">
    <property type="molecule type" value="protein"/>
</dbReference>
<dbReference type="Bgee" id="ENSG00000166902">
    <property type="expression patterns" value="Expressed in apex of heart and 198 other cell types or tissues"/>
</dbReference>
<dbReference type="ExpressionAtlas" id="Q9NX20">
    <property type="expression patterns" value="baseline and differential"/>
</dbReference>
<dbReference type="GO" id="GO:0005743">
    <property type="term" value="C:mitochondrial inner membrane"/>
    <property type="evidence" value="ECO:0000304"/>
    <property type="project" value="Reactome"/>
</dbReference>
<dbReference type="GO" id="GO:0005762">
    <property type="term" value="C:mitochondrial large ribosomal subunit"/>
    <property type="evidence" value="ECO:0000314"/>
    <property type="project" value="UniProtKB"/>
</dbReference>
<dbReference type="GO" id="GO:0005739">
    <property type="term" value="C:mitochondrion"/>
    <property type="evidence" value="ECO:0000314"/>
    <property type="project" value="UniProtKB"/>
</dbReference>
<dbReference type="GO" id="GO:0019843">
    <property type="term" value="F:rRNA binding"/>
    <property type="evidence" value="ECO:0000318"/>
    <property type="project" value="GO_Central"/>
</dbReference>
<dbReference type="GO" id="GO:0003735">
    <property type="term" value="F:structural constituent of ribosome"/>
    <property type="evidence" value="ECO:0000318"/>
    <property type="project" value="GO_Central"/>
</dbReference>
<dbReference type="GO" id="GO:0032543">
    <property type="term" value="P:mitochondrial translation"/>
    <property type="evidence" value="ECO:0000318"/>
    <property type="project" value="GO_Central"/>
</dbReference>
<dbReference type="CDD" id="cd01433">
    <property type="entry name" value="Ribosomal_L16_L10e"/>
    <property type="match status" value="1"/>
</dbReference>
<dbReference type="FunFam" id="3.90.1170.10:FF:000005">
    <property type="entry name" value="39S ribosomal protein L16, mitochondrial"/>
    <property type="match status" value="1"/>
</dbReference>
<dbReference type="Gene3D" id="3.90.1170.10">
    <property type="entry name" value="Ribosomal protein L10e/L16"/>
    <property type="match status" value="1"/>
</dbReference>
<dbReference type="InterPro" id="IPR047873">
    <property type="entry name" value="Ribosomal_uL16"/>
</dbReference>
<dbReference type="InterPro" id="IPR000114">
    <property type="entry name" value="Ribosomal_uL16_bact-type"/>
</dbReference>
<dbReference type="InterPro" id="IPR016180">
    <property type="entry name" value="Ribosomal_uL16_dom"/>
</dbReference>
<dbReference type="InterPro" id="IPR036920">
    <property type="entry name" value="Ribosomal_uL16_sf"/>
</dbReference>
<dbReference type="PANTHER" id="PTHR12220">
    <property type="entry name" value="50S/60S RIBOSOMAL PROTEIN L16"/>
    <property type="match status" value="1"/>
</dbReference>
<dbReference type="PANTHER" id="PTHR12220:SF13">
    <property type="entry name" value="LARGE RIBOSOMAL SUBUNIT PROTEIN UL16M"/>
    <property type="match status" value="1"/>
</dbReference>
<dbReference type="Pfam" id="PF00252">
    <property type="entry name" value="Ribosomal_L16"/>
    <property type="match status" value="1"/>
</dbReference>
<dbReference type="PRINTS" id="PR00060">
    <property type="entry name" value="RIBOSOMALL16"/>
</dbReference>
<dbReference type="SUPFAM" id="SSF54686">
    <property type="entry name" value="Ribosomal protein L16p/L10e"/>
    <property type="match status" value="1"/>
</dbReference>
<comment type="subunit">
    <text evidence="2 3 4 5">Component of the mitochondrial large ribosomal subunit (mt-LSU) (PubMed:25278503, PubMed:25838379, PubMed:28892042, PubMed:35177605). Mature mammalian 55S mitochondrial ribosomes consist of a small (28S) and a large (39S) subunit. The 28S small subunit contains a 12S ribosomal RNA (12S mt-rRNA) and 30 different proteins. The 39S large subunit contains a 16S rRNA (16S mt-rRNA), a copy of mitochondrial valine transfer RNA (mt-tRNA(Val)), which plays an integral structural role, and 52 different proteins.</text>
</comment>
<comment type="subcellular location">
    <subcellularLocation>
        <location evidence="2 3 4">Mitochondrion</location>
    </subcellularLocation>
</comment>
<comment type="similarity">
    <text evidence="7">Belongs to the universal ribosomal protein uL16 family.</text>
</comment>
<comment type="sequence caution" evidence="7">
    <conflict type="erroneous initiation">
        <sequence resource="EMBL-CDS" id="AAG23818"/>
    </conflict>
</comment>
<organism>
    <name type="scientific">Homo sapiens</name>
    <name type="common">Human</name>
    <dbReference type="NCBI Taxonomy" id="9606"/>
    <lineage>
        <taxon>Eukaryota</taxon>
        <taxon>Metazoa</taxon>
        <taxon>Chordata</taxon>
        <taxon>Craniata</taxon>
        <taxon>Vertebrata</taxon>
        <taxon>Euteleostomi</taxon>
        <taxon>Mammalia</taxon>
        <taxon>Eutheria</taxon>
        <taxon>Euarchontoglires</taxon>
        <taxon>Primates</taxon>
        <taxon>Haplorrhini</taxon>
        <taxon>Catarrhini</taxon>
        <taxon>Hominidae</taxon>
        <taxon>Homo</taxon>
    </lineage>
</organism>
<keyword id="KW-0002">3D-structure</keyword>
<keyword id="KW-0496">Mitochondrion</keyword>
<keyword id="KW-1267">Proteomics identification</keyword>
<keyword id="KW-1185">Reference proteome</keyword>
<keyword id="KW-0687">Ribonucleoprotein</keyword>
<keyword id="KW-0689">Ribosomal protein</keyword>
<keyword id="KW-0809">Transit peptide</keyword>
<proteinExistence type="evidence at protein level"/>
<reference key="1">
    <citation type="journal article" date="2001" name="J. Biol. Chem.">
        <title>Structural compensation for the deficit of rRNA with proteins in the mammalian mitochondrial ribosome. Systematic analysis of protein components of the large ribosomal subunit from mammalian mitochondria.</title>
        <authorList>
            <person name="Suzuki T."/>
            <person name="Terasaki M."/>
            <person name="Takemoto-Hori C."/>
            <person name="Hanada T."/>
            <person name="Ueda T."/>
            <person name="Wada A."/>
            <person name="Watanabe K."/>
        </authorList>
    </citation>
    <scope>NUCLEOTIDE SEQUENCE [MRNA]</scope>
</reference>
<reference key="2">
    <citation type="submission" date="1999-09" db="EMBL/GenBank/DDBJ databases">
        <title>A novel gene expressed in human pheochromocytoma.</title>
        <authorList>
            <person name="Peng Y."/>
            <person name="Li Y."/>
            <person name="Tu Y."/>
            <person name="Xu S."/>
            <person name="Han Z."/>
            <person name="Fu G."/>
            <person name="Chen Z."/>
        </authorList>
    </citation>
    <scope>NUCLEOTIDE SEQUENCE [MRNA]</scope>
    <source>
        <tissue>Pheochromocytoma</tissue>
    </source>
</reference>
<reference key="3">
    <citation type="journal article" date="2004" name="Nat. Genet.">
        <title>Complete sequencing and characterization of 21,243 full-length human cDNAs.</title>
        <authorList>
            <person name="Ota T."/>
            <person name="Suzuki Y."/>
            <person name="Nishikawa T."/>
            <person name="Otsuki T."/>
            <person name="Sugiyama T."/>
            <person name="Irie R."/>
            <person name="Wakamatsu A."/>
            <person name="Hayashi K."/>
            <person name="Sato H."/>
            <person name="Nagai K."/>
            <person name="Kimura K."/>
            <person name="Makita H."/>
            <person name="Sekine M."/>
            <person name="Obayashi M."/>
            <person name="Nishi T."/>
            <person name="Shibahara T."/>
            <person name="Tanaka T."/>
            <person name="Ishii S."/>
            <person name="Yamamoto J."/>
            <person name="Saito K."/>
            <person name="Kawai Y."/>
            <person name="Isono Y."/>
            <person name="Nakamura Y."/>
            <person name="Nagahari K."/>
            <person name="Murakami K."/>
            <person name="Yasuda T."/>
            <person name="Iwayanagi T."/>
            <person name="Wagatsuma M."/>
            <person name="Shiratori A."/>
            <person name="Sudo H."/>
            <person name="Hosoiri T."/>
            <person name="Kaku Y."/>
            <person name="Kodaira H."/>
            <person name="Kondo H."/>
            <person name="Sugawara M."/>
            <person name="Takahashi M."/>
            <person name="Kanda K."/>
            <person name="Yokoi T."/>
            <person name="Furuya T."/>
            <person name="Kikkawa E."/>
            <person name="Omura Y."/>
            <person name="Abe K."/>
            <person name="Kamihara K."/>
            <person name="Katsuta N."/>
            <person name="Sato K."/>
            <person name="Tanikawa M."/>
            <person name="Yamazaki M."/>
            <person name="Ninomiya K."/>
            <person name="Ishibashi T."/>
            <person name="Yamashita H."/>
            <person name="Murakawa K."/>
            <person name="Fujimori K."/>
            <person name="Tanai H."/>
            <person name="Kimata M."/>
            <person name="Watanabe M."/>
            <person name="Hiraoka S."/>
            <person name="Chiba Y."/>
            <person name="Ishida S."/>
            <person name="Ono Y."/>
            <person name="Takiguchi S."/>
            <person name="Watanabe S."/>
            <person name="Yosida M."/>
            <person name="Hotuta T."/>
            <person name="Kusano J."/>
            <person name="Kanehori K."/>
            <person name="Takahashi-Fujii A."/>
            <person name="Hara H."/>
            <person name="Tanase T.-O."/>
            <person name="Nomura Y."/>
            <person name="Togiya S."/>
            <person name="Komai F."/>
            <person name="Hara R."/>
            <person name="Takeuchi K."/>
            <person name="Arita M."/>
            <person name="Imose N."/>
            <person name="Musashino K."/>
            <person name="Yuuki H."/>
            <person name="Oshima A."/>
            <person name="Sasaki N."/>
            <person name="Aotsuka S."/>
            <person name="Yoshikawa Y."/>
            <person name="Matsunawa H."/>
            <person name="Ichihara T."/>
            <person name="Shiohata N."/>
            <person name="Sano S."/>
            <person name="Moriya S."/>
            <person name="Momiyama H."/>
            <person name="Satoh N."/>
            <person name="Takami S."/>
            <person name="Terashima Y."/>
            <person name="Suzuki O."/>
            <person name="Nakagawa S."/>
            <person name="Senoh A."/>
            <person name="Mizoguchi H."/>
            <person name="Goto Y."/>
            <person name="Shimizu F."/>
            <person name="Wakebe H."/>
            <person name="Hishigaki H."/>
            <person name="Watanabe T."/>
            <person name="Sugiyama A."/>
            <person name="Takemoto M."/>
            <person name="Kawakami B."/>
            <person name="Yamazaki M."/>
            <person name="Watanabe K."/>
            <person name="Kumagai A."/>
            <person name="Itakura S."/>
            <person name="Fukuzumi Y."/>
            <person name="Fujimori Y."/>
            <person name="Komiyama M."/>
            <person name="Tashiro H."/>
            <person name="Tanigami A."/>
            <person name="Fujiwara T."/>
            <person name="Ono T."/>
            <person name="Yamada K."/>
            <person name="Fujii Y."/>
            <person name="Ozaki K."/>
            <person name="Hirao M."/>
            <person name="Ohmori Y."/>
            <person name="Kawabata A."/>
            <person name="Hikiji T."/>
            <person name="Kobatake N."/>
            <person name="Inagaki H."/>
            <person name="Ikema Y."/>
            <person name="Okamoto S."/>
            <person name="Okitani R."/>
            <person name="Kawakami T."/>
            <person name="Noguchi S."/>
            <person name="Itoh T."/>
            <person name="Shigeta K."/>
            <person name="Senba T."/>
            <person name="Matsumura K."/>
            <person name="Nakajima Y."/>
            <person name="Mizuno T."/>
            <person name="Morinaga M."/>
            <person name="Sasaki M."/>
            <person name="Togashi T."/>
            <person name="Oyama M."/>
            <person name="Hata H."/>
            <person name="Watanabe M."/>
            <person name="Komatsu T."/>
            <person name="Mizushima-Sugano J."/>
            <person name="Satoh T."/>
            <person name="Shirai Y."/>
            <person name="Takahashi Y."/>
            <person name="Nakagawa K."/>
            <person name="Okumura K."/>
            <person name="Nagase T."/>
            <person name="Nomura N."/>
            <person name="Kikuchi H."/>
            <person name="Masuho Y."/>
            <person name="Yamashita R."/>
            <person name="Nakai K."/>
            <person name="Yada T."/>
            <person name="Nakamura Y."/>
            <person name="Ohara O."/>
            <person name="Isogai T."/>
            <person name="Sugano S."/>
        </authorList>
    </citation>
    <scope>NUCLEOTIDE SEQUENCE [LARGE SCALE MRNA]</scope>
</reference>
<reference key="4">
    <citation type="submission" date="2004-06" db="EMBL/GenBank/DDBJ databases">
        <title>Cloning of human full open reading frames in Gateway(TM) system entry vector (pDONR201).</title>
        <authorList>
            <person name="Ebert L."/>
            <person name="Schick M."/>
            <person name="Neubert P."/>
            <person name="Schatten R."/>
            <person name="Henze S."/>
            <person name="Korn B."/>
        </authorList>
    </citation>
    <scope>NUCLEOTIDE SEQUENCE [LARGE SCALE MRNA]</scope>
</reference>
<reference key="5">
    <citation type="journal article" date="2004" name="Genome Res.">
        <title>The status, quality, and expansion of the NIH full-length cDNA project: the Mammalian Gene Collection (MGC).</title>
        <authorList>
            <consortium name="The MGC Project Team"/>
        </authorList>
    </citation>
    <scope>NUCLEOTIDE SEQUENCE [LARGE SCALE MRNA]</scope>
    <source>
        <tissue>Lung</tissue>
    </source>
</reference>
<reference key="6">
    <citation type="submission" date="2000-06" db="EMBL/GenBank/DDBJ databases">
        <title>Human acute promyelocytic leukemia cell line NB4's apoptosis related genes.</title>
        <authorList>
            <person name="Yu W.-Q."/>
            <person name="Sun B.-Z."/>
            <person name="Chai Y.-B."/>
            <person name="Zhu F."/>
            <person name="Liu X.-S."/>
            <person name="Li Z."/>
            <person name="Lu F."/>
            <person name="Yan W."/>
            <person name="Yang H."/>
            <person name="Zhao Z.-L."/>
        </authorList>
    </citation>
    <scope>NUCLEOTIDE SEQUENCE [LARGE SCALE MRNA] OF 194-251</scope>
    <source>
        <tissue>Promyelocytic leukemia</tissue>
    </source>
</reference>
<reference key="7">
    <citation type="journal article" date="2001" name="J. Biol. Chem.">
        <title>The large subunit of the mammalian mitochondrial ribosome. Analysis of the complement of ribosomal proteins present.</title>
        <authorList>
            <person name="Koc E.C."/>
            <person name="Burkhart W."/>
            <person name="Blackburn K."/>
            <person name="Moyer M.B."/>
            <person name="Schlatzer D.M."/>
            <person name="Moseley A."/>
            <person name="Spremulli L.L."/>
        </authorList>
    </citation>
    <scope>IDENTIFICATION</scope>
</reference>
<reference key="8">
    <citation type="journal article" date="2011" name="BMC Syst. Biol.">
        <title>Initial characterization of the human central proteome.</title>
        <authorList>
            <person name="Burkard T.R."/>
            <person name="Planyavsky M."/>
            <person name="Kaupe I."/>
            <person name="Breitwieser F.P."/>
            <person name="Buerckstuemmer T."/>
            <person name="Bennett K.L."/>
            <person name="Superti-Furga G."/>
            <person name="Colinge J."/>
        </authorList>
    </citation>
    <scope>IDENTIFICATION BY MASS SPECTROMETRY [LARGE SCALE ANALYSIS]</scope>
</reference>
<reference key="9">
    <citation type="journal article" date="2015" name="Proteomics">
        <title>N-terminome analysis of the human mitochondrial proteome.</title>
        <authorList>
            <person name="Vaca Jacome A.S."/>
            <person name="Rabilloud T."/>
            <person name="Schaeffer-Reiss C."/>
            <person name="Rompais M."/>
            <person name="Ayoub D."/>
            <person name="Lane L."/>
            <person name="Bairoch A."/>
            <person name="Van Dorsselaer A."/>
            <person name="Carapito C."/>
        </authorList>
    </citation>
    <scope>IDENTIFICATION BY MASS SPECTROMETRY [LARGE SCALE ANALYSIS]</scope>
</reference>
<reference evidence="8" key="10">
    <citation type="journal article" date="2014" name="Science">
        <title>Structure of the large ribosomal subunit from human mitochondria.</title>
        <authorList>
            <person name="Brown A."/>
            <person name="Amunts A."/>
            <person name="Bai X.C."/>
            <person name="Sugimoto Y."/>
            <person name="Edwards P.C."/>
            <person name="Murshudov G."/>
            <person name="Scheres S.H."/>
            <person name="Ramakrishnan V."/>
        </authorList>
    </citation>
    <scope>STRUCTURE BY ELECTRON MICROSCOPY (3.40 ANGSTROMS)</scope>
    <scope>SUBCELLULAR LOCATION</scope>
    <scope>SUBUNIT</scope>
</reference>
<reference evidence="9" key="11">
    <citation type="journal article" date="2015" name="Science">
        <title>Ribosome. The structure of the human mitochondrial ribosome.</title>
        <authorList>
            <person name="Amunts A."/>
            <person name="Brown A."/>
            <person name="Toots J."/>
            <person name="Scheres S.H."/>
            <person name="Ramakrishnan V."/>
        </authorList>
    </citation>
    <scope>STRUCTURE BY ELECTRON MICROSCOPY (3.50 ANGSTROMS)</scope>
    <scope>SUBCELLULAR LOCATION</scope>
    <scope>SUBUNIT</scope>
</reference>
<reference evidence="10 11" key="12">
    <citation type="journal article" date="2017" name="Nat. Struct. Mol. Biol.">
        <title>Structures of the human mitochondrial ribosome in native states of assembly.</title>
        <authorList>
            <person name="Brown A."/>
            <person name="Rathore S."/>
            <person name="Kimanius D."/>
            <person name="Aibara S."/>
            <person name="Bai X.C."/>
            <person name="Rorbach J."/>
            <person name="Amunts A."/>
            <person name="Ramakrishnan V."/>
        </authorList>
    </citation>
    <scope>STRUCTURE BY ELECTRON MICROSCOPY (3.03 ANGSTROMS)</scope>
    <scope>SUBCELLULAR LOCATION</scope>
    <scope>SUBUNIT</scope>
</reference>
<reference evidence="12 13" key="13">
    <citation type="journal article" date="2022" name="Nat. Commun.">
        <title>A late-stage assembly checkpoint of the human mitochondrial ribosome large subunit.</title>
        <authorList>
            <person name="Rebelo-Guiomar P."/>
            <person name="Pellegrino S."/>
            <person name="Dent K.C."/>
            <person name="Sas-Chen A."/>
            <person name="Miller-Fleming L."/>
            <person name="Garone C."/>
            <person name="Van Haute L."/>
            <person name="Rogan J.F."/>
            <person name="Dinan A."/>
            <person name="Firth A.E."/>
            <person name="Andrews B."/>
            <person name="Whitworth A.J."/>
            <person name="Schwartz S."/>
            <person name="Warren A.J."/>
            <person name="Minczuk M."/>
        </authorList>
    </citation>
    <scope>STRUCTURE BY ELECTRON MICROSCOPY (2.9 ANGSTROMS) IN COMPLEX WITH MTLSU</scope>
    <scope>SUBUNIT</scope>
</reference>
<gene>
    <name type="primary">MRPL16</name>
    <name type="ORF">PNAS-111</name>
</gene>
<protein>
    <recommendedName>
        <fullName evidence="6">Large ribosomal subunit protein uL16m</fullName>
    </recommendedName>
    <alternativeName>
        <fullName>39S ribosomal protein L16, mitochondrial</fullName>
        <shortName>L16mt</shortName>
        <shortName>MRP-L16</shortName>
    </alternativeName>
</protein>
<accession>Q9NX20</accession>
<accession>Q9BYD0</accession>
<accession>Q9HB70</accession>
<feature type="transit peptide" description="Mitochondrion" evidence="1">
    <location>
        <begin position="1"/>
        <end position="29"/>
    </location>
</feature>
<feature type="chain" id="PRO_0000239841" description="Large ribosomal subunit protein uL16m">
    <location>
        <begin position="30"/>
        <end position="251"/>
    </location>
</feature>
<feature type="sequence variant" id="VAR_052006" description="In dbSNP:rs7122468.">
    <original>G</original>
    <variation>S</variation>
    <location>
        <position position="29"/>
    </location>
</feature>
<feature type="sequence variant" id="VAR_052007" description="In dbSNP:rs12787462.">
    <original>R</original>
    <variation>Q</variation>
    <location>
        <position position="199"/>
    </location>
</feature>
<feature type="sequence variant" id="VAR_052008" description="In dbSNP:rs491671.">
    <original>R</original>
    <variation>C</variation>
    <location>
        <position position="207"/>
    </location>
</feature>
<feature type="sequence conflict" description="In Ref. 1; BAB40847." evidence="7" ref="1">
    <original>V</original>
    <variation>L</variation>
    <location>
        <position position="15"/>
    </location>
</feature>
<feature type="helix" evidence="17">
    <location>
        <begin position="69"/>
        <end position="71"/>
    </location>
</feature>
<feature type="strand" evidence="16">
    <location>
        <begin position="72"/>
        <end position="75"/>
    </location>
</feature>
<feature type="strand" evidence="14">
    <location>
        <begin position="77"/>
        <end position="79"/>
    </location>
</feature>
<feature type="strand" evidence="16">
    <location>
        <begin position="86"/>
        <end position="93"/>
    </location>
</feature>
<feature type="strand" evidence="16">
    <location>
        <begin position="95"/>
        <end position="98"/>
    </location>
</feature>
<feature type="helix" evidence="16">
    <location>
        <begin position="99"/>
        <end position="111"/>
    </location>
</feature>
<feature type="turn" evidence="16">
    <location>
        <begin position="115"/>
        <end position="117"/>
    </location>
</feature>
<feature type="strand" evidence="16">
    <location>
        <begin position="119"/>
        <end position="124"/>
    </location>
</feature>
<feature type="strand" evidence="17">
    <location>
        <begin position="129"/>
        <end position="132"/>
    </location>
</feature>
<feature type="strand" evidence="15">
    <location>
        <begin position="142"/>
        <end position="144"/>
    </location>
</feature>
<feature type="strand" evidence="16">
    <location>
        <begin position="150"/>
        <end position="154"/>
    </location>
</feature>
<feature type="strand" evidence="16">
    <location>
        <begin position="159"/>
        <end position="166"/>
    </location>
</feature>
<feature type="helix" evidence="16">
    <location>
        <begin position="169"/>
        <end position="182"/>
    </location>
</feature>
<feature type="strand" evidence="16">
    <location>
        <begin position="183"/>
        <end position="185"/>
    </location>
</feature>
<feature type="strand" evidence="16">
    <location>
        <begin position="187"/>
        <end position="191"/>
    </location>
</feature>
<feature type="helix" evidence="16">
    <location>
        <begin position="192"/>
        <end position="208"/>
    </location>
</feature>
<feature type="helix" evidence="16">
    <location>
        <begin position="215"/>
        <end position="221"/>
    </location>
</feature>
<feature type="helix" evidence="16">
    <location>
        <begin position="223"/>
        <end position="228"/>
    </location>
</feature>
<feature type="helix" evidence="16">
    <location>
        <begin position="232"/>
        <end position="237"/>
    </location>
</feature>
<feature type="turn" evidence="16">
    <location>
        <begin position="238"/>
        <end position="240"/>
    </location>
</feature>
<name>RM16_HUMAN</name>
<evidence type="ECO:0000250" key="1">
    <source>
        <dbReference type="UniProtKB" id="Q3T0J3"/>
    </source>
</evidence>
<evidence type="ECO:0000269" key="2">
    <source>
    </source>
</evidence>
<evidence type="ECO:0000269" key="3">
    <source>
    </source>
</evidence>
<evidence type="ECO:0000269" key="4">
    <source>
    </source>
</evidence>
<evidence type="ECO:0000269" key="5">
    <source>
    </source>
</evidence>
<evidence type="ECO:0000303" key="6">
    <source>
    </source>
</evidence>
<evidence type="ECO:0000305" key="7"/>
<evidence type="ECO:0007744" key="8">
    <source>
        <dbReference type="PDB" id="3J7Y"/>
    </source>
</evidence>
<evidence type="ECO:0007744" key="9">
    <source>
        <dbReference type="PDB" id="3J9M"/>
    </source>
</evidence>
<evidence type="ECO:0007744" key="10">
    <source>
        <dbReference type="PDB" id="5OOL"/>
    </source>
</evidence>
<evidence type="ECO:0007744" key="11">
    <source>
        <dbReference type="PDB" id="5OOM"/>
    </source>
</evidence>
<evidence type="ECO:0007744" key="12">
    <source>
        <dbReference type="PDB" id="7QH6"/>
    </source>
</evidence>
<evidence type="ECO:0007744" key="13">
    <source>
        <dbReference type="PDB" id="7QH7"/>
    </source>
</evidence>
<evidence type="ECO:0007829" key="14">
    <source>
        <dbReference type="PDB" id="3J7Y"/>
    </source>
</evidence>
<evidence type="ECO:0007829" key="15">
    <source>
        <dbReference type="PDB" id="5OOM"/>
    </source>
</evidence>
<evidence type="ECO:0007829" key="16">
    <source>
        <dbReference type="PDB" id="7OF0"/>
    </source>
</evidence>
<evidence type="ECO:0007829" key="17">
    <source>
        <dbReference type="PDB" id="8QU5"/>
    </source>
</evidence>
<sequence length="251" mass="28449">MWRLLARASAPLLRVPLSDSWALLPASAGVKTLLPVPSFEDVSIPEKPKLRFIERAPLVPKVRREPKNLSDIRGPSTEATEFTEGNFAILALGGGYLHWGHFEMMRLTINRSMDPKNMFAIWRVPAPFKPITRKSVGHRMGGGKGAIDHYVTPVKAGRLVVEMGGRCEFEEVQGFLDQVAHKLPFAAKAVSRGTLEKMRKDQEERERNNQNPWTFERIATANMLGIRKVLSPYDLTHKGKYWGKFYMPKRV</sequence>